<reference key="1">
    <citation type="journal article" date="2000" name="Hum. Mol. Genet.">
        <title>A mouse model of galactose-induced cataracts.</title>
        <authorList>
            <person name="Ai Y."/>
            <person name="Zheng Z."/>
            <person name="O'Brien-Jenkins A."/>
            <person name="Bernard D.J."/>
            <person name="Wynshaw-Boris T."/>
            <person name="Ning C."/>
            <person name="Reynolds R."/>
            <person name="Segal S."/>
            <person name="Huang K."/>
            <person name="Stambolian D."/>
        </authorList>
    </citation>
    <scope>NUCLEOTIDE SEQUENCE [GENOMIC DNA]</scope>
    <scope>FUNCTION</scope>
    <scope>CATALYTIC ACTIVITY</scope>
</reference>
<reference key="2">
    <citation type="submission" date="1999-05" db="EMBL/GenBank/DDBJ databases">
        <title>Mouse galactokinase (galK).</title>
        <authorList>
            <person name="Seki N."/>
            <person name="Hattori A."/>
            <person name="Hayashi A."/>
            <person name="Kozuma S."/>
            <person name="Muramatsu M."/>
            <person name="Saito T."/>
        </authorList>
    </citation>
    <scope>NUCLEOTIDE SEQUENCE [MRNA]</scope>
</reference>
<reference key="3">
    <citation type="journal article" date="2005" name="Science">
        <title>The transcriptional landscape of the mammalian genome.</title>
        <authorList>
            <person name="Carninci P."/>
            <person name="Kasukawa T."/>
            <person name="Katayama S."/>
            <person name="Gough J."/>
            <person name="Frith M.C."/>
            <person name="Maeda N."/>
            <person name="Oyama R."/>
            <person name="Ravasi T."/>
            <person name="Lenhard B."/>
            <person name="Wells C."/>
            <person name="Kodzius R."/>
            <person name="Shimokawa K."/>
            <person name="Bajic V.B."/>
            <person name="Brenner S.E."/>
            <person name="Batalov S."/>
            <person name="Forrest A.R."/>
            <person name="Zavolan M."/>
            <person name="Davis M.J."/>
            <person name="Wilming L.G."/>
            <person name="Aidinis V."/>
            <person name="Allen J.E."/>
            <person name="Ambesi-Impiombato A."/>
            <person name="Apweiler R."/>
            <person name="Aturaliya R.N."/>
            <person name="Bailey T.L."/>
            <person name="Bansal M."/>
            <person name="Baxter L."/>
            <person name="Beisel K.W."/>
            <person name="Bersano T."/>
            <person name="Bono H."/>
            <person name="Chalk A.M."/>
            <person name="Chiu K.P."/>
            <person name="Choudhary V."/>
            <person name="Christoffels A."/>
            <person name="Clutterbuck D.R."/>
            <person name="Crowe M.L."/>
            <person name="Dalla E."/>
            <person name="Dalrymple B.P."/>
            <person name="de Bono B."/>
            <person name="Della Gatta G."/>
            <person name="di Bernardo D."/>
            <person name="Down T."/>
            <person name="Engstrom P."/>
            <person name="Fagiolini M."/>
            <person name="Faulkner G."/>
            <person name="Fletcher C.F."/>
            <person name="Fukushima T."/>
            <person name="Furuno M."/>
            <person name="Futaki S."/>
            <person name="Gariboldi M."/>
            <person name="Georgii-Hemming P."/>
            <person name="Gingeras T.R."/>
            <person name="Gojobori T."/>
            <person name="Green R.E."/>
            <person name="Gustincich S."/>
            <person name="Harbers M."/>
            <person name="Hayashi Y."/>
            <person name="Hensch T.K."/>
            <person name="Hirokawa N."/>
            <person name="Hill D."/>
            <person name="Huminiecki L."/>
            <person name="Iacono M."/>
            <person name="Ikeo K."/>
            <person name="Iwama A."/>
            <person name="Ishikawa T."/>
            <person name="Jakt M."/>
            <person name="Kanapin A."/>
            <person name="Katoh M."/>
            <person name="Kawasawa Y."/>
            <person name="Kelso J."/>
            <person name="Kitamura H."/>
            <person name="Kitano H."/>
            <person name="Kollias G."/>
            <person name="Krishnan S.P."/>
            <person name="Kruger A."/>
            <person name="Kummerfeld S.K."/>
            <person name="Kurochkin I.V."/>
            <person name="Lareau L.F."/>
            <person name="Lazarevic D."/>
            <person name="Lipovich L."/>
            <person name="Liu J."/>
            <person name="Liuni S."/>
            <person name="McWilliam S."/>
            <person name="Madan Babu M."/>
            <person name="Madera M."/>
            <person name="Marchionni L."/>
            <person name="Matsuda H."/>
            <person name="Matsuzawa S."/>
            <person name="Miki H."/>
            <person name="Mignone F."/>
            <person name="Miyake S."/>
            <person name="Morris K."/>
            <person name="Mottagui-Tabar S."/>
            <person name="Mulder N."/>
            <person name="Nakano N."/>
            <person name="Nakauchi H."/>
            <person name="Ng P."/>
            <person name="Nilsson R."/>
            <person name="Nishiguchi S."/>
            <person name="Nishikawa S."/>
            <person name="Nori F."/>
            <person name="Ohara O."/>
            <person name="Okazaki Y."/>
            <person name="Orlando V."/>
            <person name="Pang K.C."/>
            <person name="Pavan W.J."/>
            <person name="Pavesi G."/>
            <person name="Pesole G."/>
            <person name="Petrovsky N."/>
            <person name="Piazza S."/>
            <person name="Reed J."/>
            <person name="Reid J.F."/>
            <person name="Ring B.Z."/>
            <person name="Ringwald M."/>
            <person name="Rost B."/>
            <person name="Ruan Y."/>
            <person name="Salzberg S.L."/>
            <person name="Sandelin A."/>
            <person name="Schneider C."/>
            <person name="Schoenbach C."/>
            <person name="Sekiguchi K."/>
            <person name="Semple C.A."/>
            <person name="Seno S."/>
            <person name="Sessa L."/>
            <person name="Sheng Y."/>
            <person name="Shibata Y."/>
            <person name="Shimada H."/>
            <person name="Shimada K."/>
            <person name="Silva D."/>
            <person name="Sinclair B."/>
            <person name="Sperling S."/>
            <person name="Stupka E."/>
            <person name="Sugiura K."/>
            <person name="Sultana R."/>
            <person name="Takenaka Y."/>
            <person name="Taki K."/>
            <person name="Tammoja K."/>
            <person name="Tan S.L."/>
            <person name="Tang S."/>
            <person name="Taylor M.S."/>
            <person name="Tegner J."/>
            <person name="Teichmann S.A."/>
            <person name="Ueda H.R."/>
            <person name="van Nimwegen E."/>
            <person name="Verardo R."/>
            <person name="Wei C.L."/>
            <person name="Yagi K."/>
            <person name="Yamanishi H."/>
            <person name="Zabarovsky E."/>
            <person name="Zhu S."/>
            <person name="Zimmer A."/>
            <person name="Hide W."/>
            <person name="Bult C."/>
            <person name="Grimmond S.M."/>
            <person name="Teasdale R.D."/>
            <person name="Liu E.T."/>
            <person name="Brusic V."/>
            <person name="Quackenbush J."/>
            <person name="Wahlestedt C."/>
            <person name="Mattick J.S."/>
            <person name="Hume D.A."/>
            <person name="Kai C."/>
            <person name="Sasaki D."/>
            <person name="Tomaru Y."/>
            <person name="Fukuda S."/>
            <person name="Kanamori-Katayama M."/>
            <person name="Suzuki M."/>
            <person name="Aoki J."/>
            <person name="Arakawa T."/>
            <person name="Iida J."/>
            <person name="Imamura K."/>
            <person name="Itoh M."/>
            <person name="Kato T."/>
            <person name="Kawaji H."/>
            <person name="Kawagashira N."/>
            <person name="Kawashima T."/>
            <person name="Kojima M."/>
            <person name="Kondo S."/>
            <person name="Konno H."/>
            <person name="Nakano K."/>
            <person name="Ninomiya N."/>
            <person name="Nishio T."/>
            <person name="Okada M."/>
            <person name="Plessy C."/>
            <person name="Shibata K."/>
            <person name="Shiraki T."/>
            <person name="Suzuki S."/>
            <person name="Tagami M."/>
            <person name="Waki K."/>
            <person name="Watahiki A."/>
            <person name="Okamura-Oho Y."/>
            <person name="Suzuki H."/>
            <person name="Kawai J."/>
            <person name="Hayashizaki Y."/>
        </authorList>
    </citation>
    <scope>NUCLEOTIDE SEQUENCE [LARGE SCALE MRNA]</scope>
    <source>
        <strain>C57BL/6J</strain>
        <tissue>Corpora quadrigemina</tissue>
        <tissue>Heart</tissue>
    </source>
</reference>
<reference key="4">
    <citation type="journal article" date="2009" name="PLoS Biol.">
        <title>Lineage-specific biology revealed by a finished genome assembly of the mouse.</title>
        <authorList>
            <person name="Church D.M."/>
            <person name="Goodstadt L."/>
            <person name="Hillier L.W."/>
            <person name="Zody M.C."/>
            <person name="Goldstein S."/>
            <person name="She X."/>
            <person name="Bult C.J."/>
            <person name="Agarwala R."/>
            <person name="Cherry J.L."/>
            <person name="DiCuccio M."/>
            <person name="Hlavina W."/>
            <person name="Kapustin Y."/>
            <person name="Meric P."/>
            <person name="Maglott D."/>
            <person name="Birtle Z."/>
            <person name="Marques A.C."/>
            <person name="Graves T."/>
            <person name="Zhou S."/>
            <person name="Teague B."/>
            <person name="Potamousis K."/>
            <person name="Churas C."/>
            <person name="Place M."/>
            <person name="Herschleb J."/>
            <person name="Runnheim R."/>
            <person name="Forrest D."/>
            <person name="Amos-Landgraf J."/>
            <person name="Schwartz D.C."/>
            <person name="Cheng Z."/>
            <person name="Lindblad-Toh K."/>
            <person name="Eichler E.E."/>
            <person name="Ponting C.P."/>
        </authorList>
    </citation>
    <scope>NUCLEOTIDE SEQUENCE [LARGE SCALE GENOMIC DNA]</scope>
    <source>
        <strain>C57BL/6J</strain>
    </source>
</reference>
<reference key="5">
    <citation type="submission" date="2005-07" db="EMBL/GenBank/DDBJ databases">
        <authorList>
            <person name="Mural R.J."/>
            <person name="Adams M.D."/>
            <person name="Myers E.W."/>
            <person name="Smith H.O."/>
            <person name="Venter J.C."/>
        </authorList>
    </citation>
    <scope>NUCLEOTIDE SEQUENCE [LARGE SCALE GENOMIC DNA]</scope>
</reference>
<reference key="6">
    <citation type="journal article" date="2004" name="Genome Res.">
        <title>The status, quality, and expansion of the NIH full-length cDNA project: the Mammalian Gene Collection (MGC).</title>
        <authorList>
            <consortium name="The MGC Project Team"/>
        </authorList>
    </citation>
    <scope>NUCLEOTIDE SEQUENCE [LARGE SCALE MRNA]</scope>
    <source>
        <strain>FVB/N</strain>
        <tissue>Mammary tumor</tissue>
    </source>
</reference>
<reference key="7">
    <citation type="journal article" date="2010" name="Cell">
        <title>A tissue-specific atlas of mouse protein phosphorylation and expression.</title>
        <authorList>
            <person name="Huttlin E.L."/>
            <person name="Jedrychowski M.P."/>
            <person name="Elias J.E."/>
            <person name="Goswami T."/>
            <person name="Rad R."/>
            <person name="Beausoleil S.A."/>
            <person name="Villen J."/>
            <person name="Haas W."/>
            <person name="Sowa M.E."/>
            <person name="Gygi S.P."/>
        </authorList>
    </citation>
    <scope>IDENTIFICATION BY MASS SPECTROMETRY [LARGE SCALE ANALYSIS]</scope>
    <source>
        <tissue>Brain</tissue>
        <tissue>Brown adipose tissue</tissue>
        <tissue>Heart</tissue>
        <tissue>Kidney</tissue>
        <tissue>Liver</tissue>
        <tissue>Lung</tissue>
        <tissue>Pancreas</tissue>
        <tissue>Spleen</tissue>
        <tissue>Testis</tissue>
    </source>
</reference>
<dbReference type="EC" id="2.7.1.6" evidence="4"/>
<dbReference type="EMBL" id="AF246459">
    <property type="protein sequence ID" value="AAF78226.1"/>
    <property type="molecule type" value="Genomic_DNA"/>
</dbReference>
<dbReference type="EMBL" id="AB027012">
    <property type="protein sequence ID" value="BAA84705.1"/>
    <property type="molecule type" value="mRNA"/>
</dbReference>
<dbReference type="EMBL" id="AK045694">
    <property type="protein sequence ID" value="BAC32460.1"/>
    <property type="molecule type" value="mRNA"/>
</dbReference>
<dbReference type="EMBL" id="AK168716">
    <property type="protein sequence ID" value="BAE40558.1"/>
    <property type="molecule type" value="mRNA"/>
</dbReference>
<dbReference type="EMBL" id="AL607108">
    <property type="status" value="NOT_ANNOTATED_CDS"/>
    <property type="molecule type" value="Genomic_DNA"/>
</dbReference>
<dbReference type="EMBL" id="CH466558">
    <property type="protein sequence ID" value="EDL34544.1"/>
    <property type="molecule type" value="Genomic_DNA"/>
</dbReference>
<dbReference type="EMBL" id="BC016602">
    <property type="protein sequence ID" value="AAH16602.1"/>
    <property type="molecule type" value="mRNA"/>
</dbReference>
<dbReference type="CCDS" id="CCDS25654.1"/>
<dbReference type="RefSeq" id="NP_058601.2">
    <property type="nucleotide sequence ID" value="NM_016905.2"/>
</dbReference>
<dbReference type="SMR" id="Q9R0N0"/>
<dbReference type="BioGRID" id="199945">
    <property type="interactions" value="5"/>
</dbReference>
<dbReference type="FunCoup" id="Q9R0N0">
    <property type="interactions" value="605"/>
</dbReference>
<dbReference type="IntAct" id="Q9R0N0">
    <property type="interactions" value="4"/>
</dbReference>
<dbReference type="MINT" id="Q9R0N0"/>
<dbReference type="STRING" id="10090.ENSMUSP00000021114"/>
<dbReference type="BindingDB" id="Q9R0N0"/>
<dbReference type="ChEMBL" id="CHEMBL5169202"/>
<dbReference type="GlyGen" id="Q9R0N0">
    <property type="glycosylation" value="1 site, 1 O-linked glycan (1 site)"/>
</dbReference>
<dbReference type="iPTMnet" id="Q9R0N0"/>
<dbReference type="PhosphoSitePlus" id="Q9R0N0"/>
<dbReference type="SwissPalm" id="Q9R0N0"/>
<dbReference type="jPOST" id="Q9R0N0"/>
<dbReference type="PaxDb" id="10090-ENSMUSP00000021114"/>
<dbReference type="ProteomicsDB" id="273413"/>
<dbReference type="Pumba" id="Q9R0N0"/>
<dbReference type="Antibodypedia" id="2046">
    <property type="antibodies" value="282 antibodies from 32 providers"/>
</dbReference>
<dbReference type="DNASU" id="14635"/>
<dbReference type="Ensembl" id="ENSMUST00000021114.5">
    <property type="protein sequence ID" value="ENSMUSP00000021114.5"/>
    <property type="gene ID" value="ENSMUSG00000020766.5"/>
</dbReference>
<dbReference type="GeneID" id="14635"/>
<dbReference type="KEGG" id="mmu:14635"/>
<dbReference type="UCSC" id="uc007mjn.1">
    <property type="organism name" value="mouse"/>
</dbReference>
<dbReference type="AGR" id="MGI:95730"/>
<dbReference type="CTD" id="2584"/>
<dbReference type="MGI" id="MGI:95730">
    <property type="gene designation" value="Galk1"/>
</dbReference>
<dbReference type="VEuPathDB" id="HostDB:ENSMUSG00000020766"/>
<dbReference type="eggNOG" id="KOG0631">
    <property type="taxonomic scope" value="Eukaryota"/>
</dbReference>
<dbReference type="GeneTree" id="ENSGT00950000183187"/>
<dbReference type="HOGENOM" id="CLU_017814_2_0_1"/>
<dbReference type="InParanoid" id="Q9R0N0"/>
<dbReference type="OMA" id="VMPCAIN"/>
<dbReference type="OrthoDB" id="275179at2759"/>
<dbReference type="PhylomeDB" id="Q9R0N0"/>
<dbReference type="TreeFam" id="TF354326"/>
<dbReference type="Reactome" id="R-MMU-70370">
    <property type="pathway name" value="Galactose catabolism"/>
</dbReference>
<dbReference type="UniPathway" id="UPA00214"/>
<dbReference type="BioGRID-ORCS" id="14635">
    <property type="hits" value="2 hits in 77 CRISPR screens"/>
</dbReference>
<dbReference type="ChiTaRS" id="Galk1">
    <property type="organism name" value="mouse"/>
</dbReference>
<dbReference type="PRO" id="PR:Q9R0N0"/>
<dbReference type="Proteomes" id="UP000000589">
    <property type="component" value="Chromosome 11"/>
</dbReference>
<dbReference type="RNAct" id="Q9R0N0">
    <property type="molecule type" value="protein"/>
</dbReference>
<dbReference type="Bgee" id="ENSMUSG00000020766">
    <property type="expression patterns" value="Expressed in yolk sac and 238 other cell types or tissues"/>
</dbReference>
<dbReference type="GO" id="GO:0005737">
    <property type="term" value="C:cytoplasm"/>
    <property type="evidence" value="ECO:0007669"/>
    <property type="project" value="Ensembl"/>
</dbReference>
<dbReference type="GO" id="GO:0005524">
    <property type="term" value="F:ATP binding"/>
    <property type="evidence" value="ECO:0007669"/>
    <property type="project" value="UniProtKB-KW"/>
</dbReference>
<dbReference type="GO" id="GO:0004335">
    <property type="term" value="F:galactokinase activity"/>
    <property type="evidence" value="ECO:0000314"/>
    <property type="project" value="MGI"/>
</dbReference>
<dbReference type="GO" id="GO:0005534">
    <property type="term" value="F:galactose binding"/>
    <property type="evidence" value="ECO:0007669"/>
    <property type="project" value="Ensembl"/>
</dbReference>
<dbReference type="GO" id="GO:0019402">
    <property type="term" value="P:galactitol metabolic process"/>
    <property type="evidence" value="ECO:0000315"/>
    <property type="project" value="MGI"/>
</dbReference>
<dbReference type="GO" id="GO:0033499">
    <property type="term" value="P:galactose catabolic process via UDP-galactose, Leloir pathway"/>
    <property type="evidence" value="ECO:0000315"/>
    <property type="project" value="MGI"/>
</dbReference>
<dbReference type="GO" id="GO:0006012">
    <property type="term" value="P:galactose metabolic process"/>
    <property type="evidence" value="ECO:0000314"/>
    <property type="project" value="MGI"/>
</dbReference>
<dbReference type="GO" id="GO:0061623">
    <property type="term" value="P:glycolytic process from galactose"/>
    <property type="evidence" value="ECO:0000315"/>
    <property type="project" value="MGI"/>
</dbReference>
<dbReference type="FunFam" id="3.30.230.10:FF:000040">
    <property type="entry name" value="Galactokinase 1"/>
    <property type="match status" value="1"/>
</dbReference>
<dbReference type="FunFam" id="3.30.70.890:FF:000007">
    <property type="entry name" value="Galactokinase 1"/>
    <property type="match status" value="1"/>
</dbReference>
<dbReference type="Gene3D" id="3.30.230.10">
    <property type="match status" value="1"/>
</dbReference>
<dbReference type="Gene3D" id="3.30.70.890">
    <property type="entry name" value="GHMP kinase, C-terminal domain"/>
    <property type="match status" value="1"/>
</dbReference>
<dbReference type="InterPro" id="IPR000705">
    <property type="entry name" value="Galactokinase"/>
</dbReference>
<dbReference type="InterPro" id="IPR019741">
    <property type="entry name" value="Galactokinase_CS"/>
</dbReference>
<dbReference type="InterPro" id="IPR019539">
    <property type="entry name" value="GalKase_N"/>
</dbReference>
<dbReference type="InterPro" id="IPR013750">
    <property type="entry name" value="GHMP_kinase_C_dom"/>
</dbReference>
<dbReference type="InterPro" id="IPR036554">
    <property type="entry name" value="GHMP_kinase_C_sf"/>
</dbReference>
<dbReference type="InterPro" id="IPR006204">
    <property type="entry name" value="GHMP_kinase_N_dom"/>
</dbReference>
<dbReference type="InterPro" id="IPR006203">
    <property type="entry name" value="GHMP_knse_ATP-bd_CS"/>
</dbReference>
<dbReference type="InterPro" id="IPR006206">
    <property type="entry name" value="Mevalonate/galactokinase"/>
</dbReference>
<dbReference type="InterPro" id="IPR020568">
    <property type="entry name" value="Ribosomal_Su5_D2-typ_SF"/>
</dbReference>
<dbReference type="InterPro" id="IPR014721">
    <property type="entry name" value="Ribsml_uS5_D2-typ_fold_subgr"/>
</dbReference>
<dbReference type="NCBIfam" id="TIGR00131">
    <property type="entry name" value="gal_kin"/>
    <property type="match status" value="1"/>
</dbReference>
<dbReference type="PANTHER" id="PTHR10457:SF7">
    <property type="entry name" value="GALACTOKINASE-RELATED"/>
    <property type="match status" value="1"/>
</dbReference>
<dbReference type="PANTHER" id="PTHR10457">
    <property type="entry name" value="MEVALONATE KINASE/GALACTOKINASE"/>
    <property type="match status" value="1"/>
</dbReference>
<dbReference type="Pfam" id="PF10509">
    <property type="entry name" value="GalKase_gal_bdg"/>
    <property type="match status" value="1"/>
</dbReference>
<dbReference type="Pfam" id="PF08544">
    <property type="entry name" value="GHMP_kinases_C"/>
    <property type="match status" value="1"/>
</dbReference>
<dbReference type="Pfam" id="PF00288">
    <property type="entry name" value="GHMP_kinases_N"/>
    <property type="match status" value="1"/>
</dbReference>
<dbReference type="PIRSF" id="PIRSF000530">
    <property type="entry name" value="Galactokinase"/>
    <property type="match status" value="1"/>
</dbReference>
<dbReference type="PRINTS" id="PR00473">
    <property type="entry name" value="GALCTOKINASE"/>
</dbReference>
<dbReference type="PRINTS" id="PR00959">
    <property type="entry name" value="MEVGALKINASE"/>
</dbReference>
<dbReference type="SUPFAM" id="SSF55060">
    <property type="entry name" value="GHMP Kinase, C-terminal domain"/>
    <property type="match status" value="1"/>
</dbReference>
<dbReference type="SUPFAM" id="SSF54211">
    <property type="entry name" value="Ribosomal protein S5 domain 2-like"/>
    <property type="match status" value="1"/>
</dbReference>
<dbReference type="PROSITE" id="PS00106">
    <property type="entry name" value="GALACTOKINASE"/>
    <property type="match status" value="1"/>
</dbReference>
<dbReference type="PROSITE" id="PS00627">
    <property type="entry name" value="GHMP_KINASES_ATP"/>
    <property type="match status" value="1"/>
</dbReference>
<protein>
    <recommendedName>
        <fullName>Galactokinase</fullName>
        <ecNumber evidence="4">2.7.1.6</ecNumber>
    </recommendedName>
    <alternativeName>
        <fullName>Galactose kinase</fullName>
    </alternativeName>
</protein>
<organism>
    <name type="scientific">Mus musculus</name>
    <name type="common">Mouse</name>
    <dbReference type="NCBI Taxonomy" id="10090"/>
    <lineage>
        <taxon>Eukaryota</taxon>
        <taxon>Metazoa</taxon>
        <taxon>Chordata</taxon>
        <taxon>Craniata</taxon>
        <taxon>Vertebrata</taxon>
        <taxon>Euteleostomi</taxon>
        <taxon>Mammalia</taxon>
        <taxon>Eutheria</taxon>
        <taxon>Euarchontoglires</taxon>
        <taxon>Glires</taxon>
        <taxon>Rodentia</taxon>
        <taxon>Myomorpha</taxon>
        <taxon>Muroidea</taxon>
        <taxon>Muridae</taxon>
        <taxon>Murinae</taxon>
        <taxon>Mus</taxon>
        <taxon>Mus</taxon>
    </lineage>
</organism>
<keyword id="KW-0067">ATP-binding</keyword>
<keyword id="KW-0119">Carbohydrate metabolism</keyword>
<keyword id="KW-0299">Galactose metabolism</keyword>
<keyword id="KW-0418">Kinase</keyword>
<keyword id="KW-0547">Nucleotide-binding</keyword>
<keyword id="KW-0597">Phosphoprotein</keyword>
<keyword id="KW-1185">Reference proteome</keyword>
<keyword id="KW-0808">Transferase</keyword>
<evidence type="ECO:0000250" key="1">
    <source>
        <dbReference type="UniProtKB" id="P04385"/>
    </source>
</evidence>
<evidence type="ECO:0000250" key="2">
    <source>
        <dbReference type="UniProtKB" id="P51570"/>
    </source>
</evidence>
<evidence type="ECO:0000250" key="3">
    <source>
        <dbReference type="UniProtKB" id="Q9HHB6"/>
    </source>
</evidence>
<evidence type="ECO:0000269" key="4">
    <source>
    </source>
</evidence>
<evidence type="ECO:0000305" key="5"/>
<evidence type="ECO:0000305" key="6">
    <source>
    </source>
</evidence>
<gene>
    <name type="primary">Galk1</name>
    <name type="synonym">Galk</name>
    <name type="synonym">Glk</name>
</gene>
<comment type="function">
    <text evidence="4">Catalyzes the transfer of a phosphate from ATP to alpha-D-galactose and participates in the first committed step in the catabolism of galactose.</text>
</comment>
<comment type="catalytic activity">
    <reaction evidence="4">
        <text>alpha-D-galactose + ATP = alpha-D-galactose 1-phosphate + ADP + H(+)</text>
        <dbReference type="Rhea" id="RHEA:13553"/>
        <dbReference type="ChEBI" id="CHEBI:15378"/>
        <dbReference type="ChEBI" id="CHEBI:28061"/>
        <dbReference type="ChEBI" id="CHEBI:30616"/>
        <dbReference type="ChEBI" id="CHEBI:58336"/>
        <dbReference type="ChEBI" id="CHEBI:456216"/>
        <dbReference type="EC" id="2.7.1.6"/>
    </reaction>
    <physiologicalReaction direction="left-to-right" evidence="6">
        <dbReference type="Rhea" id="RHEA:13554"/>
    </physiologicalReaction>
</comment>
<comment type="pathway">
    <text evidence="6">Carbohydrate metabolism; galactose metabolism.</text>
</comment>
<comment type="subunit">
    <text evidence="2">Homodimer.</text>
</comment>
<comment type="similarity">
    <text evidence="5">Belongs to the GHMP kinase family. GalK subfamily.</text>
</comment>
<feature type="chain" id="PRO_0000184646" description="Galactokinase">
    <location>
        <begin position="1"/>
        <end position="392"/>
    </location>
</feature>
<feature type="active site" description="Proton acceptor" evidence="3">
    <location>
        <position position="186"/>
    </location>
</feature>
<feature type="binding site" evidence="1">
    <location>
        <position position="37"/>
    </location>
    <ligand>
        <name>alpha-D-galactose</name>
        <dbReference type="ChEBI" id="CHEBI:28061"/>
    </ligand>
</feature>
<feature type="binding site" evidence="1">
    <location>
        <position position="43"/>
    </location>
    <ligand>
        <name>alpha-D-galactose</name>
        <dbReference type="ChEBI" id="CHEBI:28061"/>
    </ligand>
</feature>
<feature type="binding site" evidence="1">
    <location>
        <position position="44"/>
    </location>
    <ligand>
        <name>alpha-D-galactose</name>
        <dbReference type="ChEBI" id="CHEBI:28061"/>
    </ligand>
</feature>
<feature type="binding site" evidence="1">
    <location>
        <position position="46"/>
    </location>
    <ligand>
        <name>alpha-D-galactose</name>
        <dbReference type="ChEBI" id="CHEBI:28061"/>
    </ligand>
</feature>
<feature type="binding site" evidence="1">
    <location>
        <position position="136"/>
    </location>
    <ligand>
        <name>ATP</name>
        <dbReference type="ChEBI" id="CHEBI:30616"/>
    </ligand>
</feature>
<feature type="binding site" evidence="1">
    <location>
        <position position="138"/>
    </location>
    <ligand>
        <name>ATP</name>
        <dbReference type="ChEBI" id="CHEBI:30616"/>
    </ligand>
</feature>
<feature type="binding site" evidence="1">
    <location>
        <position position="140"/>
    </location>
    <ligand>
        <name>ATP</name>
        <dbReference type="ChEBI" id="CHEBI:30616"/>
    </ligand>
</feature>
<feature type="binding site" evidence="1">
    <location>
        <position position="141"/>
    </location>
    <ligand>
        <name>ATP</name>
        <dbReference type="ChEBI" id="CHEBI:30616"/>
    </ligand>
</feature>
<feature type="binding site" evidence="1">
    <location>
        <position position="186"/>
    </location>
    <ligand>
        <name>alpha-D-galactose</name>
        <dbReference type="ChEBI" id="CHEBI:28061"/>
    </ligand>
</feature>
<feature type="binding site" evidence="1">
    <location>
        <position position="236"/>
    </location>
    <ligand>
        <name>alpha-D-galactose</name>
        <dbReference type="ChEBI" id="CHEBI:28061"/>
    </ligand>
</feature>
<feature type="site" description="Transition state stabilizer" evidence="3">
    <location>
        <position position="37"/>
    </location>
</feature>
<feature type="modified residue" description="Phosphoserine" evidence="2">
    <location>
        <position position="230"/>
    </location>
</feature>
<feature type="sequence conflict" description="In Ref. 1; BAA84705." evidence="5" ref="1">
    <original>AF</original>
    <variation>V</variation>
    <location>
        <begin position="19"/>
        <end position="20"/>
    </location>
</feature>
<sequence length="392" mass="42295">MAAWRPPRVEELLAEARRAFMEEFGAEPELAVSAPGRVNLIGEHTDYNQGLVLPMALELVTVMVGSPRTDGLVSLLTTSKDADEPQRLQFPLPSAQWSLEPGIPQWANYVKGVIQHYPASPLVGFSAVVVSSVPLGGGLSSSASLEVATYTFIQQLCPDSGAIAARAQVCQRAEHSFAGVPCGIMDQLIALLGQKGYALLIDCRSLETSLVPLSDPKLAVLITNSNVRHSLGSSEYPVRRRQCEEVAQALGKESLREVRMEELEAGRELMSKEGFRRARHVVSEIRRTAQAAAAMSRGDYKAFGRLMVESHYSLRDDYEVSCPELDQLVEAALSVPGVYGSRMTGGGFGGCTVTLLEASVAPLVIDHIQEQYSGTATFYLSQAADGAQVLSL</sequence>
<accession>Q9R0N0</accession>
<accession>Q9JIA6</accession>
<proteinExistence type="evidence at protein level"/>
<name>GALK1_MOUSE</name>